<accession>Q579K4</accession>
<keyword id="KW-0997">Cell inner membrane</keyword>
<keyword id="KW-1003">Cell membrane</keyword>
<keyword id="KW-0249">Electron transport</keyword>
<keyword id="KW-0285">Flavoprotein</keyword>
<keyword id="KW-0288">FMN</keyword>
<keyword id="KW-0349">Heme</keyword>
<keyword id="KW-0408">Iron</keyword>
<keyword id="KW-0472">Membrane</keyword>
<keyword id="KW-0479">Metal-binding</keyword>
<keyword id="KW-0812">Transmembrane</keyword>
<keyword id="KW-1133">Transmembrane helix</keyword>
<keyword id="KW-0813">Transport</keyword>
<protein>
    <recommendedName>
        <fullName evidence="1">Protein-methionine-sulfoxide reductase heme-binding subunit MsrQ</fullName>
    </recommendedName>
    <alternativeName>
        <fullName evidence="1">Flavocytochrome MsrQ</fullName>
    </alternativeName>
</protein>
<reference key="1">
    <citation type="journal article" date="2005" name="J. Bacteriol.">
        <title>Completion of the genome sequence of Brucella abortus and comparison to the highly similar genomes of Brucella melitensis and Brucella suis.</title>
        <authorList>
            <person name="Halling S.M."/>
            <person name="Peterson-Burch B.D."/>
            <person name="Bricker B.J."/>
            <person name="Zuerner R.L."/>
            <person name="Qing Z."/>
            <person name="Li L.-L."/>
            <person name="Kapur V."/>
            <person name="Alt D.P."/>
            <person name="Olsen S.C."/>
        </authorList>
    </citation>
    <scope>NUCLEOTIDE SEQUENCE [LARGE SCALE GENOMIC DNA]</scope>
    <source>
        <strain>9-941</strain>
    </source>
</reference>
<organism>
    <name type="scientific">Brucella abortus biovar 1 (strain 9-941)</name>
    <dbReference type="NCBI Taxonomy" id="262698"/>
    <lineage>
        <taxon>Bacteria</taxon>
        <taxon>Pseudomonadati</taxon>
        <taxon>Pseudomonadota</taxon>
        <taxon>Alphaproteobacteria</taxon>
        <taxon>Hyphomicrobiales</taxon>
        <taxon>Brucellaceae</taxon>
        <taxon>Brucella/Ochrobactrum group</taxon>
        <taxon>Brucella</taxon>
    </lineage>
</organism>
<feature type="chain" id="PRO_1000066169" description="Protein-methionine-sulfoxide reductase heme-binding subunit MsrQ">
    <location>
        <begin position="1"/>
        <end position="220"/>
    </location>
</feature>
<feature type="transmembrane region" description="Helical" evidence="1">
    <location>
        <begin position="20"/>
        <end position="40"/>
    </location>
</feature>
<feature type="transmembrane region" description="Helical" evidence="1">
    <location>
        <begin position="52"/>
        <end position="72"/>
    </location>
</feature>
<feature type="transmembrane region" description="Helical" evidence="1">
    <location>
        <begin position="86"/>
        <end position="106"/>
    </location>
</feature>
<feature type="transmembrane region" description="Helical" evidence="1">
    <location>
        <begin position="122"/>
        <end position="142"/>
    </location>
</feature>
<feature type="transmembrane region" description="Helical" evidence="1">
    <location>
        <begin position="153"/>
        <end position="173"/>
    </location>
</feature>
<feature type="transmembrane region" description="Helical" evidence="1">
    <location>
        <begin position="175"/>
        <end position="195"/>
    </location>
</feature>
<gene>
    <name evidence="1" type="primary">msrQ</name>
    <name type="ordered locus">BruAb2_0243</name>
</gene>
<sequence>MAAATGTRKKKTPRPGQWKLWLLYTAGFVPAVWTFYLGATGQLGADPVKTFEHLLGLWALRFLILTLLVTPIRDLTGITLLRYRRALGLLAFYYALMHFTTYMVLDQGLNLSAIITDIVRRPFITIGMISLALLVPLALTSNNWSIRKLGRRWSSLHKLVYIAIAGSAVHFLMSVKSWPAEPVIYAAIVAALLLWRLARPYLRTRKPALRPRGEAIALRK</sequence>
<proteinExistence type="inferred from homology"/>
<evidence type="ECO:0000255" key="1">
    <source>
        <dbReference type="HAMAP-Rule" id="MF_01207"/>
    </source>
</evidence>
<dbReference type="EMBL" id="AE017224">
    <property type="protein sequence ID" value="AAX75680.1"/>
    <property type="molecule type" value="Genomic_DNA"/>
</dbReference>
<dbReference type="RefSeq" id="WP_002965660.1">
    <property type="nucleotide sequence ID" value="NC_006933.1"/>
</dbReference>
<dbReference type="SMR" id="Q579K4"/>
<dbReference type="EnsemblBacteria" id="AAX75680">
    <property type="protein sequence ID" value="AAX75680"/>
    <property type="gene ID" value="BruAb2_0243"/>
</dbReference>
<dbReference type="GeneID" id="93015803"/>
<dbReference type="KEGG" id="bmb:BruAb2_0243"/>
<dbReference type="HOGENOM" id="CLU_080662_2_0_5"/>
<dbReference type="Proteomes" id="UP000000540">
    <property type="component" value="Chromosome II"/>
</dbReference>
<dbReference type="GO" id="GO:0005886">
    <property type="term" value="C:plasma membrane"/>
    <property type="evidence" value="ECO:0007669"/>
    <property type="project" value="UniProtKB-SubCell"/>
</dbReference>
<dbReference type="GO" id="GO:0009055">
    <property type="term" value="F:electron transfer activity"/>
    <property type="evidence" value="ECO:0007669"/>
    <property type="project" value="UniProtKB-UniRule"/>
</dbReference>
<dbReference type="GO" id="GO:0010181">
    <property type="term" value="F:FMN binding"/>
    <property type="evidence" value="ECO:0007669"/>
    <property type="project" value="UniProtKB-UniRule"/>
</dbReference>
<dbReference type="GO" id="GO:0020037">
    <property type="term" value="F:heme binding"/>
    <property type="evidence" value="ECO:0007669"/>
    <property type="project" value="UniProtKB-UniRule"/>
</dbReference>
<dbReference type="GO" id="GO:0046872">
    <property type="term" value="F:metal ion binding"/>
    <property type="evidence" value="ECO:0007669"/>
    <property type="project" value="UniProtKB-KW"/>
</dbReference>
<dbReference type="GO" id="GO:0016679">
    <property type="term" value="F:oxidoreductase activity, acting on diphenols and related substances as donors"/>
    <property type="evidence" value="ECO:0007669"/>
    <property type="project" value="TreeGrafter"/>
</dbReference>
<dbReference type="GO" id="GO:0030091">
    <property type="term" value="P:protein repair"/>
    <property type="evidence" value="ECO:0007669"/>
    <property type="project" value="UniProtKB-UniRule"/>
</dbReference>
<dbReference type="HAMAP" id="MF_01207">
    <property type="entry name" value="MsrQ"/>
    <property type="match status" value="1"/>
</dbReference>
<dbReference type="InterPro" id="IPR013130">
    <property type="entry name" value="Fe3_Rdtase_TM_dom"/>
</dbReference>
<dbReference type="InterPro" id="IPR022837">
    <property type="entry name" value="MsrQ-like"/>
</dbReference>
<dbReference type="NCBIfam" id="NF003833">
    <property type="entry name" value="PRK05419.1-5"/>
    <property type="match status" value="1"/>
</dbReference>
<dbReference type="PANTHER" id="PTHR36964">
    <property type="entry name" value="PROTEIN-METHIONINE-SULFOXIDE REDUCTASE HEME-BINDING SUBUNIT MSRQ"/>
    <property type="match status" value="1"/>
</dbReference>
<dbReference type="PANTHER" id="PTHR36964:SF1">
    <property type="entry name" value="PROTEIN-METHIONINE-SULFOXIDE REDUCTASE HEME-BINDING SUBUNIT MSRQ"/>
    <property type="match status" value="1"/>
</dbReference>
<dbReference type="Pfam" id="PF01794">
    <property type="entry name" value="Ferric_reduct"/>
    <property type="match status" value="1"/>
</dbReference>
<comment type="function">
    <text evidence="1">Part of the MsrPQ system that repairs oxidized periplasmic proteins containing methionine sulfoxide residues (Met-O), using respiratory chain electrons. Thus protects these proteins from oxidative-stress damage caused by reactive species of oxygen and chlorine generated by the host defense mechanisms. MsrPQ is essential for the maintenance of envelope integrity under bleach stress, rescuing a wide series of structurally unrelated periplasmic proteins from methionine oxidation. MsrQ provides electrons for reduction to the reductase catalytic subunit MsrP, using the quinone pool of the respiratory chain.</text>
</comment>
<comment type="cofactor">
    <cofactor evidence="1">
        <name>FMN</name>
        <dbReference type="ChEBI" id="CHEBI:58210"/>
    </cofactor>
    <text evidence="1">Binds 1 FMN per subunit.</text>
</comment>
<comment type="cofactor">
    <cofactor evidence="1">
        <name>heme b</name>
        <dbReference type="ChEBI" id="CHEBI:60344"/>
    </cofactor>
    <text evidence="1">Binds 1 heme b (iron(II)-protoporphyrin IX) group per subunit.</text>
</comment>
<comment type="subunit">
    <text evidence="1">Heterodimer of a catalytic subunit (MsrP) and a heme-binding subunit (MsrQ).</text>
</comment>
<comment type="subcellular location">
    <subcellularLocation>
        <location evidence="1">Cell inner membrane</location>
        <topology evidence="1">Multi-pass membrane protein</topology>
    </subcellularLocation>
</comment>
<comment type="similarity">
    <text evidence="1">Belongs to the MsrQ family.</text>
</comment>
<name>MSRQ_BRUAB</name>